<accession>Q89AT3</accession>
<keyword id="KW-1003">Cell membrane</keyword>
<keyword id="KW-0472">Membrane</keyword>
<keyword id="KW-1185">Reference proteome</keyword>
<keyword id="KW-0812">Transmembrane</keyword>
<keyword id="KW-1133">Transmembrane helix</keyword>
<gene>
    <name type="ordered locus">bbp_156</name>
</gene>
<name>Y156_BUCBP</name>
<dbReference type="EMBL" id="AE016826">
    <property type="protein sequence ID" value="AAO26890.1"/>
    <property type="molecule type" value="Genomic_DNA"/>
</dbReference>
<dbReference type="RefSeq" id="WP_011091291.1">
    <property type="nucleotide sequence ID" value="NC_004545.1"/>
</dbReference>
<dbReference type="SMR" id="Q89AT3"/>
<dbReference type="STRING" id="224915.bbp_156"/>
<dbReference type="KEGG" id="bab:bbp_156"/>
<dbReference type="eggNOG" id="COG0861">
    <property type="taxonomic scope" value="Bacteria"/>
</dbReference>
<dbReference type="HOGENOM" id="CLU_045644_1_2_6"/>
<dbReference type="OrthoDB" id="9783692at2"/>
<dbReference type="Proteomes" id="UP000000601">
    <property type="component" value="Chromosome"/>
</dbReference>
<dbReference type="GO" id="GO:0005886">
    <property type="term" value="C:plasma membrane"/>
    <property type="evidence" value="ECO:0007669"/>
    <property type="project" value="UniProtKB-SubCell"/>
</dbReference>
<dbReference type="InterPro" id="IPR005496">
    <property type="entry name" value="Integral_membrane_TerC"/>
</dbReference>
<dbReference type="PANTHER" id="PTHR30238">
    <property type="entry name" value="MEMBRANE BOUND PREDICTED REDOX MODULATOR"/>
    <property type="match status" value="1"/>
</dbReference>
<dbReference type="PANTHER" id="PTHR30238:SF0">
    <property type="entry name" value="THYLAKOID MEMBRANE PROTEIN TERC, CHLOROPLASTIC"/>
    <property type="match status" value="1"/>
</dbReference>
<dbReference type="Pfam" id="PF03741">
    <property type="entry name" value="TerC"/>
    <property type="match status" value="1"/>
</dbReference>
<evidence type="ECO:0000255" key="1"/>
<evidence type="ECO:0000305" key="2"/>
<proteinExistence type="inferred from homology"/>
<organism>
    <name type="scientific">Buchnera aphidicola subsp. Baizongia pistaciae (strain Bp)</name>
    <dbReference type="NCBI Taxonomy" id="224915"/>
    <lineage>
        <taxon>Bacteria</taxon>
        <taxon>Pseudomonadati</taxon>
        <taxon>Pseudomonadota</taxon>
        <taxon>Gammaproteobacteria</taxon>
        <taxon>Enterobacterales</taxon>
        <taxon>Erwiniaceae</taxon>
        <taxon>Buchnera</taxon>
    </lineage>
</organism>
<sequence length="321" mass="37196">MENTIGTPTLWCSFGVFLIIIIIIEMSIQKIFVYKESAFKIALYSSCISMLTAILFDVLIWIYIKFTVNSYLANINFLTFISGYLLEQSLSMDNVAMWFFLFQLFSISMVHQRVILFYGTFLALVFRSSIIFFGVWLLSKWSFLFYVLSIILLFTGIITILSNGVNKKTDVQNTFIMSWIYKKFRITKNFSKNNFFTKENGVIVATPLFLVLILIELNDIIFSIDSIPAIFLITKDPFIIITSSFFSIIGLRSIYVILANSIQKFYIIKYGITLILIFISIKILLKEFVDIPIMLSSFFIVCILVACFIIEKFFFQVKSKN</sequence>
<protein>
    <recommendedName>
        <fullName>Uncharacterized membrane protein bbp_156</fullName>
    </recommendedName>
</protein>
<comment type="subcellular location">
    <subcellularLocation>
        <location evidence="2">Cell membrane</location>
        <topology evidence="2">Multi-pass membrane protein</topology>
    </subcellularLocation>
</comment>
<comment type="similarity">
    <text evidence="2">Belongs to the TerC family.</text>
</comment>
<feature type="chain" id="PRO_0000103418" description="Uncharacterized membrane protein bbp_156">
    <location>
        <begin position="1"/>
        <end position="321"/>
    </location>
</feature>
<feature type="transmembrane region" description="Helical" evidence="1">
    <location>
        <begin position="10"/>
        <end position="28"/>
    </location>
</feature>
<feature type="transmembrane region" description="Helical" evidence="1">
    <location>
        <begin position="41"/>
        <end position="63"/>
    </location>
</feature>
<feature type="transmembrane region" description="Helical" evidence="1">
    <location>
        <begin position="94"/>
        <end position="111"/>
    </location>
</feature>
<feature type="transmembrane region" description="Helical" evidence="1">
    <location>
        <begin position="116"/>
        <end position="138"/>
    </location>
</feature>
<feature type="transmembrane region" description="Helical" evidence="1">
    <location>
        <begin position="143"/>
        <end position="165"/>
    </location>
</feature>
<feature type="transmembrane region" description="Helical" evidence="1">
    <location>
        <begin position="200"/>
        <end position="222"/>
    </location>
</feature>
<feature type="transmembrane region" description="Helical" evidence="1">
    <location>
        <begin position="237"/>
        <end position="259"/>
    </location>
</feature>
<feature type="transmembrane region" description="Helical" evidence="1">
    <location>
        <begin position="266"/>
        <end position="283"/>
    </location>
</feature>
<feature type="transmembrane region" description="Helical" evidence="1">
    <location>
        <begin position="293"/>
        <end position="315"/>
    </location>
</feature>
<reference key="1">
    <citation type="journal article" date="2003" name="Proc. Natl. Acad. Sci. U.S.A.">
        <title>Reductive genome evolution in Buchnera aphidicola.</title>
        <authorList>
            <person name="van Ham R.C.H.J."/>
            <person name="Kamerbeek J."/>
            <person name="Palacios C."/>
            <person name="Rausell C."/>
            <person name="Abascal F."/>
            <person name="Bastolla U."/>
            <person name="Fernandez J.M."/>
            <person name="Jimenez L."/>
            <person name="Postigo M."/>
            <person name="Silva F.J."/>
            <person name="Tamames J."/>
            <person name="Viguera E."/>
            <person name="Latorre A."/>
            <person name="Valencia A."/>
            <person name="Moran F."/>
            <person name="Moya A."/>
        </authorList>
    </citation>
    <scope>NUCLEOTIDE SEQUENCE [LARGE SCALE GENOMIC DNA]</scope>
    <source>
        <strain>Bp</strain>
    </source>
</reference>